<sequence length="2894" mass="324320">MANFTKLKNRLRADFTKNPQSIDVPNLLLLQRNSYDDFLCVDSDKESGIERVFKSVFPIQDSQNRITLEYVSCKFGKPKYTTNEAMVRGVTYAVSLQIKIRLVLWEKDEKTGERLGIKDAKEQNIFVRDIPLMTDRTSFIINGVERVVVNQLHRSPGVIFKEEESSASSNKLIYTGQIIPDRGSWLYFEYDSKDVLYARINKRRKVPVTIILRAMGYSKQDILKIFYPLQRVKYKKGKYLIPFDVDSIGNRAEFDIKDAKGNLLVSSGKRLSTKKIKELKEAKIDLIEYPLENLTNKFLAEPIINAQGEVLFDTLTQLDESKLKKLLELKINEFVIANASAAGVDNSIINSFMADAESLKMLRQSEKIDDENELAAIRIYKVMRPGEPVTKEVAKSFVRQLFFDPERYDLTRVGRMKMNHKLQINVPDYVTVLTHEDIIRTIQYLLKVKNGLGKIDDRDHLGNRRIRSIGELLANELHTGLVKMQKAIRDKLTSLSGAFDTIMPHDLINGKMITSTIMEFFTGGQLSQFMDQTNPLSEVTHKRRLSALGEGGLVKDRVGFEARDVHPTHYGRICPIETPEGQNIGLINTLSTYTRVNDLGFIEAPYRKVENGIVSQEIVYLTAAQEEGIVIAPASTAVDKNGHIIEDLIETRKDGEIILSEKSRVQLIDLSPRMLVGVAASLIPFLEHDDANRALMGSNMQRQAVPLLKPDAPVVGTGIEQIIARDSWEATKATRSGVVERVDAKNIYILGEDDNGAYIDHYHLGKNLRTNQNTCFSQQPIVRQGDRVEQGQIIADGPSMDNGELALGKNIRVAFMPWNGYNFEDAIVVSERLIKEDAFTSIHIYEKEIEARELKHGLEEITADIPGTKEAETAHLDESGIVRIGTYVSAGMILVGKVSPKGEVKPTPEERLLRAIFGEKAGHVVNKSLYCPPSLEGTVVDVKIFTKKGYEKDARAISAYEEEKRVLDIEHHDRLTMIQQEETLRISLMLSKEKLLSEVKVADKVFKKGAQIPKEELSVLNPFILSTLIKHYPKEIQTRYEQIKTNFLEQKKTLGEEHEEKLSILEKDDILPSGVVKLVKIYIATKRKLKVGDKMAGRHGNKGIVSNIVPMVDMPYTADGEPVDIVLNPLGVPSRMNIGQILEVHLGLVGKRLGQQIQEILSSQSKQWLDTLRSKMIEIAQVVNSDDKSMIEFLKNLDNEALLAYARDWSNGVKFAIPVFEGIEQEKFDKLFSLVKVDMDGKTELYDGKTGEKMRERVNVGYMYMLKLHHLVDEKVHARSTGPYSLVTQQPVGGKALFGGQRFGEMEVWALEAYGAAHTLKEMLTIKSDDTEGRRGAYKAITKGEHVGESEIPETFYVLTKELQSLALDVNIYGDEQDENGMPVPIAIKEDERPKDFSSFQLVLASPEKILSWSNGEVKKPETINYRTLKPERDGLFCTKIFGPVRDYECLCGKYKKMRYKGIVCEKCGVEVTKAKVRRSRMGHIELVAPVAHIWYVSSLPSRIGTLLGVKMKDLERVLYYEAYIVKSPGEAFYDNEGSKPILKYDVLNEEQFQSINQRFEHTGFVAQMGGEAIKELLEELDLILLLNTLREEIRSTNSEAKKKTIVKRLKVVESFINSGNRPEWMMLTILPVLPPDLRPLVALDGGKFAVSDVNDLYRRVINRNQRLKRLIELDSPEIIVRNEKRMLQEAVDALFDNGRNANAVKGANKRPLKSLSEIIKGKQGRFRQNLLGKRVDFSGRSVIVVGPNLKMNQCGLPKNMALELFKPHLFAKLEEKGYATTLKQAVKMVNQKTNEVWECLQEIVNGYPVLLNRAPTLHKQSIQAFHPKLIDGKAIQLHPLVCSAFNADFDGDQMAVHVPLSQEAIAECKILMLSSMNILLPASGKAVAVPSQDMVLGLYYLSLEKKGVKGEHKILASIDEIVMAIEMGELDINARIKTVHNRRVIDTTAGRMILSSILPDFVPLNLWNQTMKKKDIGTLIDYVYKEGGLGITATFLDNLKNLGFKYATKAGISISAADIIIPHNKATMIDEAKKEIKRIQGEFEQGLLTAQERYNKSIDIWTETSEKMGKLMMEKVKNDKEGFNSIYMMADSGARGSEAQIRQLSAMRGLMAKPDGTIIETPITSNFKEGLNVLEYFNSTHGARKGLADTALKTANAGYLTRKLIDVSQNMKVTIEDCGTHEGVEITDITVGSDMIEPLEERVVGRVLARDVIDPIANEILLSEGVLIDSTMARRIKEANVKSVMIRTPVTCKAQKGVCAKCYGLNLGESKMVKPGEAVGVLAAQSIGEPGTQLTLRTFHVGGTASRSTEEKQIVAKKEGFIRYYNIRTYTNSKGQKIVANRRNAAILVVEPRIKAEFDGELEVENVHDEVHITIVGDKKRSETYRLRKDDVAKQNELAGVAGKIEGKLLVPHESGYKVKAGGSIVDTIMDSWNIPTRIPYGSELKVEDNAPISQKITAKEKGIVKFYTLRADTLERNHNVKAGMVVSEKGMFAVIADQNDREAIRHYIARTSKILVDDNSEVDINTLISEPTSTEQIVVAEWDAYSEPIIADQAGIVSFRDIIAGLTVSEQEDENTHQKNFVINEYVPAGYKPMLVVTTKDGKEISYRLESRTSIAVNDGDKVEIADIIAKVPKALAKSKDITGGLPRVTELFEARKPKDTAILSELDGTVSFGKPIRGKERIIITAADGRVAEYAVDKNKKILVHEQEFIHAGEAMTDGVISSHDILRISGEKELHKYIVSEVQQVYRRQGVSIADKHIEIIVSQMLRQVKIVDSGNTKFIEGDLASKRHFKEENERILSIGGEPAVAEPVLLGITRAAIGSDSIISAASFQETTKVLTEASIAAKKDTLDDLKENVVLGRMIPVGTGLYKNKKFHYRCEKQEEYEEDEEE</sequence>
<organism>
    <name type="scientific">Helicobacter hepaticus (strain ATCC 51449 / 3B1)</name>
    <dbReference type="NCBI Taxonomy" id="235279"/>
    <lineage>
        <taxon>Bacteria</taxon>
        <taxon>Pseudomonadati</taxon>
        <taxon>Campylobacterota</taxon>
        <taxon>Epsilonproteobacteria</taxon>
        <taxon>Campylobacterales</taxon>
        <taxon>Helicobacteraceae</taxon>
        <taxon>Helicobacter</taxon>
    </lineage>
</organism>
<feature type="chain" id="PRO_0000048003" description="Bifunctional DNA-directed RNA polymerase subunit beta-beta'">
    <location>
        <begin position="1"/>
        <end position="2894"/>
    </location>
</feature>
<feature type="region of interest" description="DNA-directed RNA polymerase subunit beta">
    <location>
        <begin position="1"/>
        <end position="1378"/>
    </location>
</feature>
<feature type="region of interest" description="DNA-directed RNA polymerase subunit beta'">
    <location>
        <begin position="1385"/>
        <end position="2894"/>
    </location>
</feature>
<feature type="binding site" evidence="3">
    <location>
        <position position="1450"/>
    </location>
    <ligand>
        <name>Zn(2+)</name>
        <dbReference type="ChEBI" id="CHEBI:29105"/>
        <label>1</label>
    </ligand>
</feature>
<feature type="binding site" evidence="3">
    <location>
        <position position="1452"/>
    </location>
    <ligand>
        <name>Zn(2+)</name>
        <dbReference type="ChEBI" id="CHEBI:29105"/>
        <label>1</label>
    </ligand>
</feature>
<feature type="binding site" evidence="3">
    <location>
        <position position="1465"/>
    </location>
    <ligand>
        <name>Zn(2+)</name>
        <dbReference type="ChEBI" id="CHEBI:29105"/>
        <label>1</label>
    </ligand>
</feature>
<feature type="binding site" evidence="3">
    <location>
        <position position="1468"/>
    </location>
    <ligand>
        <name>Zn(2+)</name>
        <dbReference type="ChEBI" id="CHEBI:29105"/>
        <label>1</label>
    </ligand>
</feature>
<feature type="binding site" evidence="3">
    <location>
        <position position="1849"/>
    </location>
    <ligand>
        <name>Mg(2+)</name>
        <dbReference type="ChEBI" id="CHEBI:18420"/>
    </ligand>
</feature>
<feature type="binding site" evidence="3">
    <location>
        <position position="1851"/>
    </location>
    <ligand>
        <name>Mg(2+)</name>
        <dbReference type="ChEBI" id="CHEBI:18420"/>
    </ligand>
</feature>
<feature type="binding site" evidence="3">
    <location>
        <position position="1853"/>
    </location>
    <ligand>
        <name>Mg(2+)</name>
        <dbReference type="ChEBI" id="CHEBI:18420"/>
    </ligand>
</feature>
<feature type="binding site" evidence="3">
    <location>
        <position position="2179"/>
    </location>
    <ligand>
        <name>Zn(2+)</name>
        <dbReference type="ChEBI" id="CHEBI:29105"/>
        <label>2</label>
    </ligand>
</feature>
<feature type="binding site" evidence="3">
    <location>
        <position position="2253"/>
    </location>
    <ligand>
        <name>Zn(2+)</name>
        <dbReference type="ChEBI" id="CHEBI:29105"/>
        <label>2</label>
    </ligand>
</feature>
<feature type="binding site" evidence="3">
    <location>
        <position position="2260"/>
    </location>
    <ligand>
        <name>Zn(2+)</name>
        <dbReference type="ChEBI" id="CHEBI:29105"/>
        <label>2</label>
    </ligand>
</feature>
<feature type="binding site" evidence="3">
    <location>
        <position position="2263"/>
    </location>
    <ligand>
        <name>Zn(2+)</name>
        <dbReference type="ChEBI" id="CHEBI:29105"/>
        <label>2</label>
    </ligand>
</feature>
<evidence type="ECO:0000250" key="1">
    <source>
        <dbReference type="UniProtKB" id="O25806"/>
    </source>
</evidence>
<evidence type="ECO:0000255" key="2">
    <source>
        <dbReference type="HAMAP-Rule" id="MF_01321"/>
    </source>
</evidence>
<evidence type="ECO:0000255" key="3">
    <source>
        <dbReference type="HAMAP-Rule" id="MF_01322"/>
    </source>
</evidence>
<evidence type="ECO:0000305" key="4"/>
<comment type="function">
    <text evidence="2 3">DNA-dependent RNA polymerase catalyzes the transcription of DNA into RNA using the four ribonucleoside triphosphates as substrates.</text>
</comment>
<comment type="catalytic activity">
    <reaction evidence="2 3">
        <text>RNA(n) + a ribonucleoside 5'-triphosphate = RNA(n+1) + diphosphate</text>
        <dbReference type="Rhea" id="RHEA:21248"/>
        <dbReference type="Rhea" id="RHEA-COMP:14527"/>
        <dbReference type="Rhea" id="RHEA-COMP:17342"/>
        <dbReference type="ChEBI" id="CHEBI:33019"/>
        <dbReference type="ChEBI" id="CHEBI:61557"/>
        <dbReference type="ChEBI" id="CHEBI:140395"/>
        <dbReference type="EC" id="2.7.7.6"/>
    </reaction>
</comment>
<comment type="cofactor">
    <cofactor evidence="3">
        <name>Mg(2+)</name>
        <dbReference type="ChEBI" id="CHEBI:18420"/>
    </cofactor>
    <text evidence="3">Binds 1 Mg(2+) ion per subunit.</text>
</comment>
<comment type="cofactor">
    <cofactor evidence="3">
        <name>Zn(2+)</name>
        <dbReference type="ChEBI" id="CHEBI:29105"/>
    </cofactor>
    <text evidence="3">Binds 2 Zn(2+) ions per subunit.</text>
</comment>
<comment type="subunit">
    <text evidence="2 3">The RNAP catalytic core consists of 2 alpha, 1 beta/beta' and 1 omega subunit. When a sigma factor is associated with the core the holoenzyme is formed, which can initiate transcription.</text>
</comment>
<comment type="miscellaneous">
    <text evidence="1">Fusion of rpoB and rpoC occurs naturally in Helicobacter species and at least some Wolbachia; the protein has been artificially split in two in H.pylori. The split protein seems to function normally.</text>
</comment>
<comment type="similarity">
    <text evidence="4">In the N-terminal section; belongs to the RNA polymerase beta chain family.</text>
</comment>
<comment type="similarity">
    <text evidence="4">In the C-terminal section; belongs to the RNA polymerase beta' chain family.</text>
</comment>
<name>RPOBC_HELHP</name>
<protein>
    <recommendedName>
        <fullName>Bifunctional DNA-directed RNA polymerase subunit beta-beta'</fullName>
        <ecNumber evidence="2 3">2.7.7.6</ecNumber>
    </recommendedName>
    <domain>
        <recommendedName>
            <fullName evidence="2">DNA-directed RNA polymerase subunit beta</fullName>
        </recommendedName>
        <alternativeName>
            <fullName evidence="2">RNA polymerase subunit beta</fullName>
        </alternativeName>
        <alternativeName>
            <fullName evidence="2">Transcriptase subunit beta</fullName>
        </alternativeName>
    </domain>
    <domain>
        <recommendedName>
            <fullName evidence="3">DNA-directed RNA polymerase subunit beta'</fullName>
        </recommendedName>
        <alternativeName>
            <fullName evidence="3">RNA polymerase beta'</fullName>
        </alternativeName>
        <alternativeName>
            <fullName evidence="3">Transcriptase subunit beta'</fullName>
        </alternativeName>
    </domain>
</protein>
<keyword id="KW-0240">DNA-directed RNA polymerase</keyword>
<keyword id="KW-0460">Magnesium</keyword>
<keyword id="KW-0479">Metal-binding</keyword>
<keyword id="KW-0548">Nucleotidyltransferase</keyword>
<keyword id="KW-1185">Reference proteome</keyword>
<keyword id="KW-0804">Transcription</keyword>
<keyword id="KW-0808">Transferase</keyword>
<keyword id="KW-0862">Zinc</keyword>
<proteinExistence type="inferred from homology"/>
<gene>
    <name type="primary">rpoBC</name>
    <name type="ordered locus">HH_0361</name>
</gene>
<dbReference type="EC" id="2.7.7.6" evidence="2 3"/>
<dbReference type="EMBL" id="AE017125">
    <property type="protein sequence ID" value="AAP76958.1"/>
    <property type="molecule type" value="Genomic_DNA"/>
</dbReference>
<dbReference type="RefSeq" id="WP_011115204.1">
    <property type="nucleotide sequence ID" value="NC_004917.1"/>
</dbReference>
<dbReference type="SMR" id="Q7VJ82"/>
<dbReference type="STRING" id="235279.HH_0361"/>
<dbReference type="KEGG" id="hhe:HH_0361"/>
<dbReference type="eggNOG" id="COG0085">
    <property type="taxonomic scope" value="Bacteria"/>
</dbReference>
<dbReference type="eggNOG" id="COG0086">
    <property type="taxonomic scope" value="Bacteria"/>
</dbReference>
<dbReference type="HOGENOM" id="CLU_000524_0_1_7"/>
<dbReference type="OrthoDB" id="9815296at2"/>
<dbReference type="Proteomes" id="UP000002495">
    <property type="component" value="Chromosome"/>
</dbReference>
<dbReference type="GO" id="GO:0000428">
    <property type="term" value="C:DNA-directed RNA polymerase complex"/>
    <property type="evidence" value="ECO:0007669"/>
    <property type="project" value="UniProtKB-KW"/>
</dbReference>
<dbReference type="GO" id="GO:0003677">
    <property type="term" value="F:DNA binding"/>
    <property type="evidence" value="ECO:0007669"/>
    <property type="project" value="UniProtKB-UniRule"/>
</dbReference>
<dbReference type="GO" id="GO:0003899">
    <property type="term" value="F:DNA-directed RNA polymerase activity"/>
    <property type="evidence" value="ECO:0007669"/>
    <property type="project" value="UniProtKB-UniRule"/>
</dbReference>
<dbReference type="GO" id="GO:0000287">
    <property type="term" value="F:magnesium ion binding"/>
    <property type="evidence" value="ECO:0007669"/>
    <property type="project" value="UniProtKB-UniRule"/>
</dbReference>
<dbReference type="GO" id="GO:0032549">
    <property type="term" value="F:ribonucleoside binding"/>
    <property type="evidence" value="ECO:0007669"/>
    <property type="project" value="InterPro"/>
</dbReference>
<dbReference type="GO" id="GO:0008270">
    <property type="term" value="F:zinc ion binding"/>
    <property type="evidence" value="ECO:0007669"/>
    <property type="project" value="UniProtKB-UniRule"/>
</dbReference>
<dbReference type="GO" id="GO:0006351">
    <property type="term" value="P:DNA-templated transcription"/>
    <property type="evidence" value="ECO:0007669"/>
    <property type="project" value="UniProtKB-UniRule"/>
</dbReference>
<dbReference type="CDD" id="cd00653">
    <property type="entry name" value="RNA_pol_B_RPB2"/>
    <property type="match status" value="1"/>
</dbReference>
<dbReference type="CDD" id="cd02655">
    <property type="entry name" value="RNAP_beta'_C"/>
    <property type="match status" value="1"/>
</dbReference>
<dbReference type="CDD" id="cd01609">
    <property type="entry name" value="RNAP_beta'_N"/>
    <property type="match status" value="1"/>
</dbReference>
<dbReference type="FunFam" id="1.10.132.30:FF:000003">
    <property type="entry name" value="DNA-directed RNA polymerase subunit beta"/>
    <property type="match status" value="1"/>
</dbReference>
<dbReference type="Gene3D" id="1.10.132.30">
    <property type="match status" value="1"/>
</dbReference>
<dbReference type="Gene3D" id="1.10.150.390">
    <property type="match status" value="1"/>
</dbReference>
<dbReference type="Gene3D" id="1.10.1790.20">
    <property type="match status" value="1"/>
</dbReference>
<dbReference type="Gene3D" id="1.10.40.90">
    <property type="match status" value="1"/>
</dbReference>
<dbReference type="Gene3D" id="2.40.40.20">
    <property type="match status" value="1"/>
</dbReference>
<dbReference type="Gene3D" id="2.40.50.100">
    <property type="match status" value="4"/>
</dbReference>
<dbReference type="Gene3D" id="2.40.50.150">
    <property type="match status" value="1"/>
</dbReference>
<dbReference type="Gene3D" id="3.90.1100.10">
    <property type="match status" value="2"/>
</dbReference>
<dbReference type="Gene3D" id="2.30.150.10">
    <property type="entry name" value="DNA-directed RNA polymerase, beta subunit, external 1 domain"/>
    <property type="match status" value="1"/>
</dbReference>
<dbReference type="Gene3D" id="2.40.270.10">
    <property type="entry name" value="DNA-directed RNA polymerase, subunit 2, domain 6"/>
    <property type="match status" value="2"/>
</dbReference>
<dbReference type="Gene3D" id="3.90.1800.10">
    <property type="entry name" value="RNA polymerase alpha subunit dimerisation domain"/>
    <property type="match status" value="1"/>
</dbReference>
<dbReference type="Gene3D" id="4.10.860.120">
    <property type="entry name" value="RNA polymerase II, clamp domain"/>
    <property type="match status" value="1"/>
</dbReference>
<dbReference type="Gene3D" id="1.10.274.100">
    <property type="entry name" value="RNA polymerase Rpb1, domain 3"/>
    <property type="match status" value="2"/>
</dbReference>
<dbReference type="Gene3D" id="3.90.1110.10">
    <property type="entry name" value="RNA polymerase Rpb2, domain 2"/>
    <property type="match status" value="2"/>
</dbReference>
<dbReference type="HAMAP" id="MF_01321">
    <property type="entry name" value="RNApol_bact_RpoB"/>
    <property type="match status" value="1"/>
</dbReference>
<dbReference type="HAMAP" id="MF_01322">
    <property type="entry name" value="RNApol_bact_RpoC"/>
    <property type="match status" value="1"/>
</dbReference>
<dbReference type="InterPro" id="IPR042107">
    <property type="entry name" value="DNA-dir_RNA_pol_bsu_ext_1_sf"/>
</dbReference>
<dbReference type="InterPro" id="IPR019462">
    <property type="entry name" value="DNA-dir_RNA_pol_bsu_external_1"/>
</dbReference>
<dbReference type="InterPro" id="IPR015712">
    <property type="entry name" value="DNA-dir_RNA_pol_su2"/>
</dbReference>
<dbReference type="InterPro" id="IPR007120">
    <property type="entry name" value="DNA-dir_RNAP_su2_dom"/>
</dbReference>
<dbReference type="InterPro" id="IPR037033">
    <property type="entry name" value="DNA-dir_RNAP_su2_hyb_sf"/>
</dbReference>
<dbReference type="InterPro" id="IPR045867">
    <property type="entry name" value="DNA-dir_RpoC_beta_prime"/>
</dbReference>
<dbReference type="InterPro" id="IPR012754">
    <property type="entry name" value="DNA-dir_RpoC_beta_prime_bact"/>
</dbReference>
<dbReference type="InterPro" id="IPR000722">
    <property type="entry name" value="RNA_pol_asu"/>
</dbReference>
<dbReference type="InterPro" id="IPR010243">
    <property type="entry name" value="RNA_pol_bsu_bac"/>
</dbReference>
<dbReference type="InterPro" id="IPR007121">
    <property type="entry name" value="RNA_pol_bsu_CS"/>
</dbReference>
<dbReference type="InterPro" id="IPR007644">
    <property type="entry name" value="RNA_pol_bsu_protrusion"/>
</dbReference>
<dbReference type="InterPro" id="IPR006592">
    <property type="entry name" value="RNA_pol_N"/>
</dbReference>
<dbReference type="InterPro" id="IPR007080">
    <property type="entry name" value="RNA_pol_Rpb1_1"/>
</dbReference>
<dbReference type="InterPro" id="IPR007066">
    <property type="entry name" value="RNA_pol_Rpb1_3"/>
</dbReference>
<dbReference type="InterPro" id="IPR042102">
    <property type="entry name" value="RNA_pol_Rpb1_3_sf"/>
</dbReference>
<dbReference type="InterPro" id="IPR007083">
    <property type="entry name" value="RNA_pol_Rpb1_4"/>
</dbReference>
<dbReference type="InterPro" id="IPR007081">
    <property type="entry name" value="RNA_pol_Rpb1_5"/>
</dbReference>
<dbReference type="InterPro" id="IPR044893">
    <property type="entry name" value="RNA_pol_Rpb1_clamp_domain"/>
</dbReference>
<dbReference type="InterPro" id="IPR007642">
    <property type="entry name" value="RNA_pol_Rpb2_2"/>
</dbReference>
<dbReference type="InterPro" id="IPR037034">
    <property type="entry name" value="RNA_pol_Rpb2_2_sf"/>
</dbReference>
<dbReference type="InterPro" id="IPR007645">
    <property type="entry name" value="RNA_pol_Rpb2_3"/>
</dbReference>
<dbReference type="InterPro" id="IPR007641">
    <property type="entry name" value="RNA_pol_Rpb2_7"/>
</dbReference>
<dbReference type="InterPro" id="IPR014724">
    <property type="entry name" value="RNA_pol_RPB2_OB-fold"/>
</dbReference>
<dbReference type="InterPro" id="IPR038120">
    <property type="entry name" value="Rpb1_funnel_sf"/>
</dbReference>
<dbReference type="NCBIfam" id="NF001616">
    <property type="entry name" value="PRK00405.1"/>
    <property type="match status" value="1"/>
</dbReference>
<dbReference type="NCBIfam" id="NF007172">
    <property type="entry name" value="PRK09603.1"/>
    <property type="match status" value="1"/>
</dbReference>
<dbReference type="NCBIfam" id="TIGR02013">
    <property type="entry name" value="rpoB"/>
    <property type="match status" value="1"/>
</dbReference>
<dbReference type="NCBIfam" id="TIGR02386">
    <property type="entry name" value="rpoC_TIGR"/>
    <property type="match status" value="1"/>
</dbReference>
<dbReference type="PANTHER" id="PTHR19376">
    <property type="entry name" value="DNA-DIRECTED RNA POLYMERASE"/>
    <property type="match status" value="1"/>
</dbReference>
<dbReference type="PANTHER" id="PTHR19376:SF54">
    <property type="entry name" value="DNA-DIRECTED RNA POLYMERASE SUBUNIT BETA"/>
    <property type="match status" value="1"/>
</dbReference>
<dbReference type="Pfam" id="PF04997">
    <property type="entry name" value="RNA_pol_Rpb1_1"/>
    <property type="match status" value="1"/>
</dbReference>
<dbReference type="Pfam" id="PF00623">
    <property type="entry name" value="RNA_pol_Rpb1_2"/>
    <property type="match status" value="1"/>
</dbReference>
<dbReference type="Pfam" id="PF04983">
    <property type="entry name" value="RNA_pol_Rpb1_3"/>
    <property type="match status" value="1"/>
</dbReference>
<dbReference type="Pfam" id="PF05000">
    <property type="entry name" value="RNA_pol_Rpb1_4"/>
    <property type="match status" value="1"/>
</dbReference>
<dbReference type="Pfam" id="PF04998">
    <property type="entry name" value="RNA_pol_Rpb1_5"/>
    <property type="match status" value="1"/>
</dbReference>
<dbReference type="Pfam" id="PF04563">
    <property type="entry name" value="RNA_pol_Rpb2_1"/>
    <property type="match status" value="1"/>
</dbReference>
<dbReference type="Pfam" id="PF04561">
    <property type="entry name" value="RNA_pol_Rpb2_2"/>
    <property type="match status" value="2"/>
</dbReference>
<dbReference type="Pfam" id="PF04565">
    <property type="entry name" value="RNA_pol_Rpb2_3"/>
    <property type="match status" value="1"/>
</dbReference>
<dbReference type="Pfam" id="PF10385">
    <property type="entry name" value="RNA_pol_Rpb2_45"/>
    <property type="match status" value="1"/>
</dbReference>
<dbReference type="Pfam" id="PF00562">
    <property type="entry name" value="RNA_pol_Rpb2_6"/>
    <property type="match status" value="1"/>
</dbReference>
<dbReference type="Pfam" id="PF04560">
    <property type="entry name" value="RNA_pol_Rpb2_7"/>
    <property type="match status" value="1"/>
</dbReference>
<dbReference type="SMART" id="SM00663">
    <property type="entry name" value="RPOLA_N"/>
    <property type="match status" value="1"/>
</dbReference>
<dbReference type="SUPFAM" id="SSF64484">
    <property type="entry name" value="beta and beta-prime subunits of DNA dependent RNA-polymerase"/>
    <property type="match status" value="2"/>
</dbReference>
<dbReference type="PROSITE" id="PS01166">
    <property type="entry name" value="RNA_POL_BETA"/>
    <property type="match status" value="1"/>
</dbReference>
<accession>Q7VJ82</accession>
<reference key="1">
    <citation type="journal article" date="2003" name="Proc. Natl. Acad. Sci. U.S.A.">
        <title>The complete genome sequence of the carcinogenic bacterium Helicobacter hepaticus.</title>
        <authorList>
            <person name="Suerbaum S."/>
            <person name="Josenhans C."/>
            <person name="Sterzenbach T."/>
            <person name="Drescher B."/>
            <person name="Brandt P."/>
            <person name="Bell M."/>
            <person name="Droege M."/>
            <person name="Fartmann B."/>
            <person name="Fischer H.-P."/>
            <person name="Ge Z."/>
            <person name="Hoerster A."/>
            <person name="Holland R."/>
            <person name="Klein K."/>
            <person name="Koenig J."/>
            <person name="Macko L."/>
            <person name="Mendz G.L."/>
            <person name="Nyakatura G."/>
            <person name="Schauer D.B."/>
            <person name="Shen Z."/>
            <person name="Weber J."/>
            <person name="Frosch M."/>
            <person name="Fox J.G."/>
        </authorList>
    </citation>
    <scope>NUCLEOTIDE SEQUENCE [LARGE SCALE GENOMIC DNA]</scope>
    <source>
        <strain>ATCC 51449 / 3B1</strain>
    </source>
</reference>